<protein>
    <recommendedName>
        <fullName evidence="2">Type II methyltransferase M1.MboII</fullName>
        <shortName evidence="2">M1.MboII</shortName>
        <ecNumber>2.1.1.72</ecNumber>
    </recommendedName>
    <alternativeName>
        <fullName>Adenine-specific methyltransferase MboII</fullName>
    </alternativeName>
    <alternativeName>
        <fullName>DNA MTase MboIIA</fullName>
    </alternativeName>
    <alternativeName>
        <fullName>Modification methylase MboII</fullName>
        <shortName evidence="3">M.MboII</shortName>
    </alternativeName>
</protein>
<feature type="chain" id="PRO_0000087967" description="Type II methyltransferase M1.MboII">
    <location>
        <begin position="1"/>
        <end position="260"/>
    </location>
</feature>
<feature type="binding site" evidence="1 6">
    <location>
        <position position="12"/>
    </location>
    <ligand>
        <name>S-adenosyl-L-methionine</name>
        <dbReference type="ChEBI" id="CHEBI:59789"/>
    </ligand>
</feature>
<feature type="binding site" evidence="1 6">
    <location>
        <position position="30"/>
    </location>
    <ligand>
        <name>S-adenosyl-L-methionine</name>
        <dbReference type="ChEBI" id="CHEBI:59789"/>
    </ligand>
</feature>
<feature type="binding site" evidence="1 6">
    <location>
        <position position="197"/>
    </location>
    <ligand>
        <name>S-adenosyl-L-methionine</name>
        <dbReference type="ChEBI" id="CHEBI:59789"/>
    </ligand>
</feature>
<feature type="binding site" evidence="1 6">
    <location>
        <begin position="223"/>
        <end position="225"/>
    </location>
    <ligand>
        <name>S-adenosyl-L-methionine</name>
        <dbReference type="ChEBI" id="CHEBI:59789"/>
    </ligand>
</feature>
<feature type="binding site" evidence="1 6">
    <location>
        <begin position="241"/>
        <end position="242"/>
    </location>
    <ligand>
        <name>S-adenosyl-L-methionine</name>
        <dbReference type="ChEBI" id="CHEBI:59789"/>
    </ligand>
</feature>
<feature type="strand" evidence="7">
    <location>
        <begin position="4"/>
        <end position="9"/>
    </location>
</feature>
<feature type="helix" evidence="7">
    <location>
        <begin position="12"/>
        <end position="18"/>
    </location>
</feature>
<feature type="strand" evidence="7">
    <location>
        <begin position="24"/>
        <end position="29"/>
    </location>
</feature>
<feature type="helix" evidence="7">
    <location>
        <begin position="39"/>
        <end position="41"/>
    </location>
</feature>
<feature type="helix" evidence="7">
    <location>
        <begin position="46"/>
        <end position="63"/>
    </location>
</feature>
<feature type="strand" evidence="7">
    <location>
        <begin position="64"/>
        <end position="74"/>
    </location>
</feature>
<feature type="helix" evidence="7">
    <location>
        <begin position="76"/>
        <end position="88"/>
    </location>
</feature>
<feature type="strand" evidence="7">
    <location>
        <begin position="92"/>
        <end position="99"/>
    </location>
</feature>
<feature type="strand" evidence="7">
    <location>
        <begin position="109"/>
        <end position="111"/>
    </location>
</feature>
<feature type="strand" evidence="7">
    <location>
        <begin position="117"/>
        <end position="125"/>
    </location>
</feature>
<feature type="helix" evidence="7">
    <location>
        <begin position="132"/>
        <end position="134"/>
    </location>
</feature>
<feature type="helix" evidence="7">
    <location>
        <begin position="141"/>
        <end position="151"/>
    </location>
</feature>
<feature type="strand" evidence="7">
    <location>
        <begin position="170"/>
        <end position="173"/>
    </location>
</feature>
<feature type="helix" evidence="7">
    <location>
        <begin position="199"/>
        <end position="209"/>
    </location>
</feature>
<feature type="strand" evidence="7">
    <location>
        <begin position="215"/>
        <end position="220"/>
    </location>
</feature>
<feature type="helix" evidence="7">
    <location>
        <begin position="225"/>
        <end position="232"/>
    </location>
</feature>
<feature type="strand" evidence="7">
    <location>
        <begin position="236"/>
        <end position="242"/>
    </location>
</feature>
<feature type="helix" evidence="7">
    <location>
        <begin position="244"/>
        <end position="255"/>
    </location>
</feature>
<sequence length="260" mass="30077">MLEINKIHQMNCFDFLDQVENKSVQLAVIDPPYNLSKADWDSFDSHNEFLPFTYRWIDKVLDKLDKDGSLYIFNTPFNCAFICQYLVSKGMIFQNWITWDKRDGMGSAKRGFSTGQETILFFSKSKNHTFNYDEVRVPYESTDRIKHASEKGILKNGKRWFPNPNGRLCGEVWHFSSQRHKEKVNGKTVKLTHITPKPRDLIERIIRASSNPNDLVLDCFMGSGTTAIVAKKLGRNFIGCDMNAEYVNQANFVLNQLEIN</sequence>
<dbReference type="EC" id="2.1.1.72"/>
<dbReference type="EMBL" id="X56977">
    <property type="protein sequence ID" value="CAA40297.1"/>
    <property type="molecule type" value="Genomic_DNA"/>
</dbReference>
<dbReference type="PIR" id="S26835">
    <property type="entry name" value="S26835"/>
</dbReference>
<dbReference type="PDB" id="1G60">
    <property type="method" value="X-ray"/>
    <property type="resolution" value="1.74 A"/>
    <property type="chains" value="A/B=1-260"/>
</dbReference>
<dbReference type="PDBsum" id="1G60"/>
<dbReference type="SMR" id="P23192"/>
<dbReference type="STRING" id="476.B0182_06905"/>
<dbReference type="REBASE" id="3441">
    <property type="entry name" value="M1.MboII"/>
</dbReference>
<dbReference type="REBASE" id="767831">
    <property type="entry name" value="M.SspSPORF2370P"/>
</dbReference>
<dbReference type="BRENDA" id="2.1.1.72">
    <property type="organism ID" value="3416"/>
</dbReference>
<dbReference type="EvolutionaryTrace" id="P23192"/>
<dbReference type="PRO" id="PR:P23192"/>
<dbReference type="GO" id="GO:0005737">
    <property type="term" value="C:cytoplasm"/>
    <property type="evidence" value="ECO:0007669"/>
    <property type="project" value="TreeGrafter"/>
</dbReference>
<dbReference type="GO" id="GO:0003677">
    <property type="term" value="F:DNA binding"/>
    <property type="evidence" value="ECO:0007669"/>
    <property type="project" value="UniProtKB-KW"/>
</dbReference>
<dbReference type="GO" id="GO:0008170">
    <property type="term" value="F:N-methyltransferase activity"/>
    <property type="evidence" value="ECO:0007669"/>
    <property type="project" value="InterPro"/>
</dbReference>
<dbReference type="GO" id="GO:0009007">
    <property type="term" value="F:site-specific DNA-methyltransferase (adenine-specific) activity"/>
    <property type="evidence" value="ECO:0007669"/>
    <property type="project" value="UniProtKB-EC"/>
</dbReference>
<dbReference type="GO" id="GO:0009307">
    <property type="term" value="P:DNA restriction-modification system"/>
    <property type="evidence" value="ECO:0007669"/>
    <property type="project" value="UniProtKB-KW"/>
</dbReference>
<dbReference type="GO" id="GO:0032259">
    <property type="term" value="P:methylation"/>
    <property type="evidence" value="ECO:0007669"/>
    <property type="project" value="UniProtKB-KW"/>
</dbReference>
<dbReference type="Gene3D" id="3.40.50.150">
    <property type="entry name" value="Vaccinia Virus protein VP39"/>
    <property type="match status" value="1"/>
</dbReference>
<dbReference type="InterPro" id="IPR002941">
    <property type="entry name" value="DNA_methylase_N4/N6"/>
</dbReference>
<dbReference type="InterPro" id="IPR002052">
    <property type="entry name" value="DNA_methylase_N6_adenine_CS"/>
</dbReference>
<dbReference type="InterPro" id="IPR001091">
    <property type="entry name" value="RM_Methyltransferase"/>
</dbReference>
<dbReference type="InterPro" id="IPR029063">
    <property type="entry name" value="SAM-dependent_MTases_sf"/>
</dbReference>
<dbReference type="PANTHER" id="PTHR13370">
    <property type="entry name" value="RNA METHYLASE-RELATED"/>
    <property type="match status" value="1"/>
</dbReference>
<dbReference type="PANTHER" id="PTHR13370:SF24">
    <property type="entry name" value="TYPE III RESTRICTION-MODIFICATION ENZYME STYLTI MOD SUBUNIT"/>
    <property type="match status" value="1"/>
</dbReference>
<dbReference type="Pfam" id="PF01555">
    <property type="entry name" value="N6_N4_Mtase"/>
    <property type="match status" value="1"/>
</dbReference>
<dbReference type="PRINTS" id="PR00508">
    <property type="entry name" value="S21N4MTFRASE"/>
</dbReference>
<dbReference type="SUPFAM" id="SSF53335">
    <property type="entry name" value="S-adenosyl-L-methionine-dependent methyltransferases"/>
    <property type="match status" value="1"/>
</dbReference>
<dbReference type="PROSITE" id="PS00092">
    <property type="entry name" value="N6_MTASE"/>
    <property type="match status" value="1"/>
</dbReference>
<keyword id="KW-0002">3D-structure</keyword>
<keyword id="KW-0238">DNA-binding</keyword>
<keyword id="KW-0489">Methyltransferase</keyword>
<keyword id="KW-0680">Restriction system</keyword>
<keyword id="KW-0949">S-adenosyl-L-methionine</keyword>
<keyword id="KW-0808">Transferase</keyword>
<name>MTM2_MORBO</name>
<accession>P23192</accession>
<proteinExistence type="evidence at protein level"/>
<comment type="function">
    <text evidence="2">A beta subtype methylase that recognizes the double-stranded sequence 5'-GAAGA-3', methylates A-5 on the top strand, and protects the DNA from cleavage by the MboII endonuclease. It is not known if the cytosine of the complementary sequence TCTTC is also methylated by this enzyme.</text>
</comment>
<comment type="catalytic activity">
    <reaction>
        <text>a 2'-deoxyadenosine in DNA + S-adenosyl-L-methionine = an N(6)-methyl-2'-deoxyadenosine in DNA + S-adenosyl-L-homocysteine + H(+)</text>
        <dbReference type="Rhea" id="RHEA:15197"/>
        <dbReference type="Rhea" id="RHEA-COMP:12418"/>
        <dbReference type="Rhea" id="RHEA-COMP:12419"/>
        <dbReference type="ChEBI" id="CHEBI:15378"/>
        <dbReference type="ChEBI" id="CHEBI:57856"/>
        <dbReference type="ChEBI" id="CHEBI:59789"/>
        <dbReference type="ChEBI" id="CHEBI:90615"/>
        <dbReference type="ChEBI" id="CHEBI:90616"/>
        <dbReference type="EC" id="2.1.1.72"/>
    </reaction>
</comment>
<comment type="subunit">
    <text evidence="1 5">At low concentration exists as a monomer and homodimer (PubMed:12954781). Probably binds to DNA as a monomer (Probable).</text>
</comment>
<comment type="similarity">
    <text evidence="4">Belongs to the N(4)/N(6)-methyltransferase family.</text>
</comment>
<reference key="1">
    <citation type="journal article" date="1991" name="Nucleic Acids Res.">
        <title>Cloning and characterization of the MboII restriction-modification system.</title>
        <authorList>
            <person name="Bocklage H."/>
            <person name="Heeger K."/>
            <person name="Mueller-Hill B."/>
        </authorList>
    </citation>
    <scope>NUCLEOTIDE SEQUENCE [GENOMIC DNA]</scope>
    <source>
        <strain>ATCC 10900 / DSM 6328 / CIP 70.40 / JCM 17254 / LMG 986 / NCTC 11013</strain>
    </source>
</reference>
<reference key="2">
    <citation type="journal article" date="2003" name="Nucleic Acids Res.">
        <title>A nomenclature for restriction enzymes, DNA methyltransferases, homing endonucleases and their genes.</title>
        <authorList>
            <person name="Roberts R.J."/>
            <person name="Belfort M."/>
            <person name="Bestor T."/>
            <person name="Bhagwat A.S."/>
            <person name="Bickle T.A."/>
            <person name="Bitinaite J."/>
            <person name="Blumenthal R.M."/>
            <person name="Degtyarev S.K."/>
            <person name="Dryden D.T."/>
            <person name="Dybvig K."/>
            <person name="Firman K."/>
            <person name="Gromova E.S."/>
            <person name="Gumport R.I."/>
            <person name="Halford S.E."/>
            <person name="Hattman S."/>
            <person name="Heitman J."/>
            <person name="Hornby D.P."/>
            <person name="Janulaitis A."/>
            <person name="Jeltsch A."/>
            <person name="Josephsen J."/>
            <person name="Kiss A."/>
            <person name="Klaenhammer T.R."/>
            <person name="Kobayashi I."/>
            <person name="Kong H."/>
            <person name="Krueger D.H."/>
            <person name="Lacks S."/>
            <person name="Marinus M.G."/>
            <person name="Miyahara M."/>
            <person name="Morgan R.D."/>
            <person name="Murray N.E."/>
            <person name="Nagaraja V."/>
            <person name="Piekarowicz A."/>
            <person name="Pingoud A."/>
            <person name="Raleigh E."/>
            <person name="Rao D.N."/>
            <person name="Reich N."/>
            <person name="Repin V.E."/>
            <person name="Selker E.U."/>
            <person name="Shaw P.C."/>
            <person name="Stein D.C."/>
            <person name="Stoddard B.L."/>
            <person name="Szybalski W."/>
            <person name="Trautner T.A."/>
            <person name="Van Etten J.L."/>
            <person name="Vitor J.M."/>
            <person name="Wilson G.G."/>
            <person name="Xu S.Y."/>
        </authorList>
    </citation>
    <scope>NOMENCLATURE</scope>
    <scope>SUBTYPE</scope>
</reference>
<reference key="3">
    <citation type="journal article" date="2003" name="Nucleic Acids Res.">
        <title>Crystal structure of MboIIA methyltransferase.</title>
        <authorList>
            <person name="Osipiuk J."/>
            <person name="Walsh M.A."/>
            <person name="Joachimiak A."/>
        </authorList>
    </citation>
    <scope>X-RAY CRYSTALLOGRAPHY (1.74 ANGSTROMS) IN COMPLEX WITH S-ADENOSYL-L-METHIONINE</scope>
    <scope>SUBUNIT</scope>
</reference>
<evidence type="ECO:0000269" key="1">
    <source>
    </source>
</evidence>
<evidence type="ECO:0000303" key="2">
    <source>
    </source>
</evidence>
<evidence type="ECO:0000303" key="3">
    <source>
    </source>
</evidence>
<evidence type="ECO:0000305" key="4"/>
<evidence type="ECO:0000305" key="5">
    <source>
    </source>
</evidence>
<evidence type="ECO:0007744" key="6">
    <source>
        <dbReference type="PDB" id="1G60"/>
    </source>
</evidence>
<evidence type="ECO:0007829" key="7">
    <source>
        <dbReference type="PDB" id="1G60"/>
    </source>
</evidence>
<gene>
    <name evidence="3" type="primary">mboIIM</name>
</gene>
<organism>
    <name type="scientific">Moraxella bovis</name>
    <dbReference type="NCBI Taxonomy" id="476"/>
    <lineage>
        <taxon>Bacteria</taxon>
        <taxon>Pseudomonadati</taxon>
        <taxon>Pseudomonadota</taxon>
        <taxon>Gammaproteobacteria</taxon>
        <taxon>Moraxellales</taxon>
        <taxon>Moraxellaceae</taxon>
        <taxon>Moraxella</taxon>
    </lineage>
</organism>